<gene>
    <name evidence="1" type="primary">nadK</name>
    <name type="ordered locus">VC_0853</name>
</gene>
<keyword id="KW-0067">ATP-binding</keyword>
<keyword id="KW-0963">Cytoplasm</keyword>
<keyword id="KW-0418">Kinase</keyword>
<keyword id="KW-0520">NAD</keyword>
<keyword id="KW-0521">NADP</keyword>
<keyword id="KW-0547">Nucleotide-binding</keyword>
<keyword id="KW-1185">Reference proteome</keyword>
<keyword id="KW-0808">Transferase</keyword>
<name>NADK_VIBCH</name>
<protein>
    <recommendedName>
        <fullName evidence="1">NAD kinase</fullName>
        <ecNumber evidence="1">2.7.1.23</ecNumber>
    </recommendedName>
    <alternativeName>
        <fullName evidence="1">ATP-dependent NAD kinase</fullName>
    </alternativeName>
</protein>
<organism>
    <name type="scientific">Vibrio cholerae serotype O1 (strain ATCC 39315 / El Tor Inaba N16961)</name>
    <dbReference type="NCBI Taxonomy" id="243277"/>
    <lineage>
        <taxon>Bacteria</taxon>
        <taxon>Pseudomonadati</taxon>
        <taxon>Pseudomonadota</taxon>
        <taxon>Gammaproteobacteria</taxon>
        <taxon>Vibrionales</taxon>
        <taxon>Vibrionaceae</taxon>
        <taxon>Vibrio</taxon>
    </lineage>
</organism>
<evidence type="ECO:0000255" key="1">
    <source>
        <dbReference type="HAMAP-Rule" id="MF_00361"/>
    </source>
</evidence>
<sequence length="294" mass="32698">MKKPFNVLAIIGKPRDQQAIQTHKEIYHWLRSLGYTVFIDDRLREILTDLPTEHFASLIELGKKADLAIVVGGDGNMLGAARVLSRFDISVIGVNRGNLGFLTDLNPEDFQQRLQEVLDGHYLQETRFLLEAEIHRHGQVKSHNAALNEAVLHPGKIAHMIEFEVYIDDNFAFSQRSDGLIVSTPTGSTAYSLSGGGPILSPSLNAITLVPMFPHTLSCRPLVVGGNQRIKLVVSPENRGTQEVSCDGQVSLPVSPGDEIHIYQSPNVLKLIHPQDYSYYHVLRTKLGWSSKLF</sequence>
<proteinExistence type="inferred from homology"/>
<reference key="1">
    <citation type="journal article" date="2000" name="Nature">
        <title>DNA sequence of both chromosomes of the cholera pathogen Vibrio cholerae.</title>
        <authorList>
            <person name="Heidelberg J.F."/>
            <person name="Eisen J.A."/>
            <person name="Nelson W.C."/>
            <person name="Clayton R.A."/>
            <person name="Gwinn M.L."/>
            <person name="Dodson R.J."/>
            <person name="Haft D.H."/>
            <person name="Hickey E.K."/>
            <person name="Peterson J.D."/>
            <person name="Umayam L.A."/>
            <person name="Gill S.R."/>
            <person name="Nelson K.E."/>
            <person name="Read T.D."/>
            <person name="Tettelin H."/>
            <person name="Richardson D.L."/>
            <person name="Ermolaeva M.D."/>
            <person name="Vamathevan J.J."/>
            <person name="Bass S."/>
            <person name="Qin H."/>
            <person name="Dragoi I."/>
            <person name="Sellers P."/>
            <person name="McDonald L.A."/>
            <person name="Utterback T.R."/>
            <person name="Fleischmann R.D."/>
            <person name="Nierman W.C."/>
            <person name="White O."/>
            <person name="Salzberg S.L."/>
            <person name="Smith H.O."/>
            <person name="Colwell R.R."/>
            <person name="Mekalanos J.J."/>
            <person name="Venter J.C."/>
            <person name="Fraser C.M."/>
        </authorList>
    </citation>
    <scope>NUCLEOTIDE SEQUENCE [LARGE SCALE GENOMIC DNA]</scope>
    <source>
        <strain>ATCC 39315 / El Tor Inaba N16961</strain>
    </source>
</reference>
<feature type="chain" id="PRO_0000120686" description="NAD kinase">
    <location>
        <begin position="1"/>
        <end position="294"/>
    </location>
</feature>
<feature type="active site" description="Proton acceptor" evidence="1">
    <location>
        <position position="74"/>
    </location>
</feature>
<feature type="binding site" evidence="1">
    <location>
        <begin position="74"/>
        <end position="75"/>
    </location>
    <ligand>
        <name>NAD(+)</name>
        <dbReference type="ChEBI" id="CHEBI:57540"/>
    </ligand>
</feature>
<feature type="binding site" evidence="1">
    <location>
        <begin position="148"/>
        <end position="149"/>
    </location>
    <ligand>
        <name>NAD(+)</name>
        <dbReference type="ChEBI" id="CHEBI:57540"/>
    </ligand>
</feature>
<feature type="binding site" evidence="1">
    <location>
        <position position="159"/>
    </location>
    <ligand>
        <name>NAD(+)</name>
        <dbReference type="ChEBI" id="CHEBI:57540"/>
    </ligand>
</feature>
<feature type="binding site" evidence="1">
    <location>
        <position position="176"/>
    </location>
    <ligand>
        <name>NAD(+)</name>
        <dbReference type="ChEBI" id="CHEBI:57540"/>
    </ligand>
</feature>
<feature type="binding site" evidence="1">
    <location>
        <position position="178"/>
    </location>
    <ligand>
        <name>NAD(+)</name>
        <dbReference type="ChEBI" id="CHEBI:57540"/>
    </ligand>
</feature>
<feature type="binding site" evidence="1">
    <location>
        <begin position="189"/>
        <end position="194"/>
    </location>
    <ligand>
        <name>NAD(+)</name>
        <dbReference type="ChEBI" id="CHEBI:57540"/>
    </ligand>
</feature>
<feature type="binding site" evidence="1">
    <location>
        <position position="249"/>
    </location>
    <ligand>
        <name>NAD(+)</name>
        <dbReference type="ChEBI" id="CHEBI:57540"/>
    </ligand>
</feature>
<dbReference type="EC" id="2.7.1.23" evidence="1"/>
<dbReference type="EMBL" id="AE003852">
    <property type="protein sequence ID" value="AAF94015.1"/>
    <property type="molecule type" value="Genomic_DNA"/>
</dbReference>
<dbReference type="PIR" id="H82272">
    <property type="entry name" value="H82272"/>
</dbReference>
<dbReference type="RefSeq" id="NP_230500.1">
    <property type="nucleotide sequence ID" value="NC_002505.1"/>
</dbReference>
<dbReference type="RefSeq" id="WP_000742830.1">
    <property type="nucleotide sequence ID" value="NZ_LT906614.1"/>
</dbReference>
<dbReference type="SMR" id="Q9KTP8"/>
<dbReference type="STRING" id="243277.VC_0853"/>
<dbReference type="DNASU" id="2614520"/>
<dbReference type="EnsemblBacteria" id="AAF94015">
    <property type="protein sequence ID" value="AAF94015"/>
    <property type="gene ID" value="VC_0853"/>
</dbReference>
<dbReference type="GeneID" id="89515030"/>
<dbReference type="KEGG" id="vch:VC_0853"/>
<dbReference type="PATRIC" id="fig|243277.26.peg.813"/>
<dbReference type="eggNOG" id="COG0061">
    <property type="taxonomic scope" value="Bacteria"/>
</dbReference>
<dbReference type="HOGENOM" id="CLU_008831_0_1_6"/>
<dbReference type="Proteomes" id="UP000000584">
    <property type="component" value="Chromosome 1"/>
</dbReference>
<dbReference type="GO" id="GO:0005737">
    <property type="term" value="C:cytoplasm"/>
    <property type="evidence" value="ECO:0007669"/>
    <property type="project" value="UniProtKB-SubCell"/>
</dbReference>
<dbReference type="GO" id="GO:0005524">
    <property type="term" value="F:ATP binding"/>
    <property type="evidence" value="ECO:0007669"/>
    <property type="project" value="UniProtKB-KW"/>
</dbReference>
<dbReference type="GO" id="GO:0046872">
    <property type="term" value="F:metal ion binding"/>
    <property type="evidence" value="ECO:0007669"/>
    <property type="project" value="UniProtKB-UniRule"/>
</dbReference>
<dbReference type="GO" id="GO:0051287">
    <property type="term" value="F:NAD binding"/>
    <property type="evidence" value="ECO:0007669"/>
    <property type="project" value="UniProtKB-ARBA"/>
</dbReference>
<dbReference type="GO" id="GO:0003951">
    <property type="term" value="F:NAD+ kinase activity"/>
    <property type="evidence" value="ECO:0000318"/>
    <property type="project" value="GO_Central"/>
</dbReference>
<dbReference type="GO" id="GO:0019674">
    <property type="term" value="P:NAD metabolic process"/>
    <property type="evidence" value="ECO:0007669"/>
    <property type="project" value="InterPro"/>
</dbReference>
<dbReference type="GO" id="GO:0006741">
    <property type="term" value="P:NADP biosynthetic process"/>
    <property type="evidence" value="ECO:0000318"/>
    <property type="project" value="GO_Central"/>
</dbReference>
<dbReference type="FunFam" id="2.60.200.30:FF:000001">
    <property type="entry name" value="NAD kinase"/>
    <property type="match status" value="1"/>
</dbReference>
<dbReference type="Gene3D" id="3.40.50.10330">
    <property type="entry name" value="Probable inorganic polyphosphate/atp-NAD kinase, domain 1"/>
    <property type="match status" value="1"/>
</dbReference>
<dbReference type="Gene3D" id="2.60.200.30">
    <property type="entry name" value="Probable inorganic polyphosphate/atp-NAD kinase, domain 2"/>
    <property type="match status" value="1"/>
</dbReference>
<dbReference type="HAMAP" id="MF_00361">
    <property type="entry name" value="NAD_kinase"/>
    <property type="match status" value="1"/>
</dbReference>
<dbReference type="InterPro" id="IPR017438">
    <property type="entry name" value="ATP-NAD_kinase_N"/>
</dbReference>
<dbReference type="InterPro" id="IPR017437">
    <property type="entry name" value="ATP-NAD_kinase_PpnK-typ_C"/>
</dbReference>
<dbReference type="InterPro" id="IPR016064">
    <property type="entry name" value="NAD/diacylglycerol_kinase_sf"/>
</dbReference>
<dbReference type="InterPro" id="IPR002504">
    <property type="entry name" value="NADK"/>
</dbReference>
<dbReference type="NCBIfam" id="NF002306">
    <property type="entry name" value="PRK01231.1"/>
    <property type="match status" value="1"/>
</dbReference>
<dbReference type="NCBIfam" id="NF002893">
    <property type="entry name" value="PRK03378.1"/>
    <property type="match status" value="1"/>
</dbReference>
<dbReference type="PANTHER" id="PTHR20275">
    <property type="entry name" value="NAD KINASE"/>
    <property type="match status" value="1"/>
</dbReference>
<dbReference type="PANTHER" id="PTHR20275:SF0">
    <property type="entry name" value="NAD KINASE"/>
    <property type="match status" value="1"/>
</dbReference>
<dbReference type="Pfam" id="PF01513">
    <property type="entry name" value="NAD_kinase"/>
    <property type="match status" value="1"/>
</dbReference>
<dbReference type="Pfam" id="PF20143">
    <property type="entry name" value="NAD_kinase_C"/>
    <property type="match status" value="1"/>
</dbReference>
<dbReference type="SUPFAM" id="SSF111331">
    <property type="entry name" value="NAD kinase/diacylglycerol kinase-like"/>
    <property type="match status" value="1"/>
</dbReference>
<accession>Q9KTP8</accession>
<comment type="function">
    <text evidence="1">Involved in the regulation of the intracellular balance of NAD and NADP, and is a key enzyme in the biosynthesis of NADP. Catalyzes specifically the phosphorylation on 2'-hydroxyl of the adenosine moiety of NAD to yield NADP.</text>
</comment>
<comment type="catalytic activity">
    <reaction evidence="1">
        <text>NAD(+) + ATP = ADP + NADP(+) + H(+)</text>
        <dbReference type="Rhea" id="RHEA:18629"/>
        <dbReference type="ChEBI" id="CHEBI:15378"/>
        <dbReference type="ChEBI" id="CHEBI:30616"/>
        <dbReference type="ChEBI" id="CHEBI:57540"/>
        <dbReference type="ChEBI" id="CHEBI:58349"/>
        <dbReference type="ChEBI" id="CHEBI:456216"/>
        <dbReference type="EC" id="2.7.1.23"/>
    </reaction>
</comment>
<comment type="cofactor">
    <cofactor evidence="1">
        <name>a divalent metal cation</name>
        <dbReference type="ChEBI" id="CHEBI:60240"/>
    </cofactor>
</comment>
<comment type="subcellular location">
    <subcellularLocation>
        <location evidence="1">Cytoplasm</location>
    </subcellularLocation>
</comment>
<comment type="similarity">
    <text evidence="1">Belongs to the NAD kinase family.</text>
</comment>